<proteinExistence type="inferred from homology"/>
<accession>B1IVB3</accession>
<dbReference type="EC" id="2.1.1.-" evidence="1"/>
<dbReference type="EC" id="2.1.1.35" evidence="1"/>
<dbReference type="EMBL" id="CP000946">
    <property type="protein sequence ID" value="ACA79650.1"/>
    <property type="molecule type" value="Genomic_DNA"/>
</dbReference>
<dbReference type="RefSeq" id="WP_000187022.1">
    <property type="nucleotide sequence ID" value="NZ_MTFT01000042.1"/>
</dbReference>
<dbReference type="SMR" id="B1IVB3"/>
<dbReference type="GeneID" id="75203203"/>
<dbReference type="KEGG" id="ecl:EcolC_4051"/>
<dbReference type="HOGENOM" id="CLU_043022_0_0_6"/>
<dbReference type="GO" id="GO:0005829">
    <property type="term" value="C:cytosol"/>
    <property type="evidence" value="ECO:0007669"/>
    <property type="project" value="TreeGrafter"/>
</dbReference>
<dbReference type="GO" id="GO:0019843">
    <property type="term" value="F:rRNA binding"/>
    <property type="evidence" value="ECO:0007669"/>
    <property type="project" value="TreeGrafter"/>
</dbReference>
<dbReference type="GO" id="GO:0030697">
    <property type="term" value="F:tRNA (uracil(54)-C5)-methyltransferase activity, S-adenosyl methionine-dependent"/>
    <property type="evidence" value="ECO:0007669"/>
    <property type="project" value="UniProtKB-UniRule"/>
</dbReference>
<dbReference type="GO" id="GO:0000049">
    <property type="term" value="F:tRNA binding"/>
    <property type="evidence" value="ECO:0007669"/>
    <property type="project" value="TreeGrafter"/>
</dbReference>
<dbReference type="GO" id="GO:0030488">
    <property type="term" value="P:tRNA methylation"/>
    <property type="evidence" value="ECO:0007669"/>
    <property type="project" value="UniProtKB-UniRule"/>
</dbReference>
<dbReference type="CDD" id="cd02440">
    <property type="entry name" value="AdoMet_MTases"/>
    <property type="match status" value="1"/>
</dbReference>
<dbReference type="FunFam" id="2.40.50.1070:FF:000001">
    <property type="entry name" value="tRNA/tmRNA (uracil-C(5))-methyltransferase"/>
    <property type="match status" value="1"/>
</dbReference>
<dbReference type="FunFam" id="3.40.50.150:FF:000012">
    <property type="entry name" value="tRNA/tmRNA (uracil-C(5))-methyltransferase"/>
    <property type="match status" value="1"/>
</dbReference>
<dbReference type="Gene3D" id="2.40.50.1070">
    <property type="match status" value="1"/>
</dbReference>
<dbReference type="Gene3D" id="3.40.50.150">
    <property type="entry name" value="Vaccinia Virus protein VP39"/>
    <property type="match status" value="1"/>
</dbReference>
<dbReference type="HAMAP" id="MF_01011">
    <property type="entry name" value="RNA_methyltr_TrmA"/>
    <property type="match status" value="1"/>
</dbReference>
<dbReference type="InterPro" id="IPR030390">
    <property type="entry name" value="MeTrfase_TrmA_AS"/>
</dbReference>
<dbReference type="InterPro" id="IPR030391">
    <property type="entry name" value="MeTrfase_TrmA_CS"/>
</dbReference>
<dbReference type="InterPro" id="IPR029063">
    <property type="entry name" value="SAM-dependent_MTases_sf"/>
</dbReference>
<dbReference type="InterPro" id="IPR011869">
    <property type="entry name" value="TrmA_MeTrfase"/>
</dbReference>
<dbReference type="InterPro" id="IPR010280">
    <property type="entry name" value="U5_MeTrfase_fam"/>
</dbReference>
<dbReference type="NCBIfam" id="TIGR02143">
    <property type="entry name" value="trmA_only"/>
    <property type="match status" value="1"/>
</dbReference>
<dbReference type="PANTHER" id="PTHR47790">
    <property type="entry name" value="TRNA/TMRNA (URACIL-C(5))-METHYLTRANSFERASE"/>
    <property type="match status" value="1"/>
</dbReference>
<dbReference type="PANTHER" id="PTHR47790:SF2">
    <property type="entry name" value="TRNA_TMRNA (URACIL-C(5))-METHYLTRANSFERASE"/>
    <property type="match status" value="1"/>
</dbReference>
<dbReference type="Pfam" id="PF05958">
    <property type="entry name" value="tRNA_U5-meth_tr"/>
    <property type="match status" value="1"/>
</dbReference>
<dbReference type="SUPFAM" id="SSF53335">
    <property type="entry name" value="S-adenosyl-L-methionine-dependent methyltransferases"/>
    <property type="match status" value="1"/>
</dbReference>
<dbReference type="PROSITE" id="PS51687">
    <property type="entry name" value="SAM_MT_RNA_M5U"/>
    <property type="match status" value="1"/>
</dbReference>
<dbReference type="PROSITE" id="PS01230">
    <property type="entry name" value="TRMA_1"/>
    <property type="match status" value="1"/>
</dbReference>
<dbReference type="PROSITE" id="PS01231">
    <property type="entry name" value="TRMA_2"/>
    <property type="match status" value="1"/>
</dbReference>
<name>TRMA_ECOLC</name>
<feature type="chain" id="PRO_1000084035" description="tRNA/tmRNA (uracil-C(5))-methyltransferase">
    <location>
        <begin position="1"/>
        <end position="366"/>
    </location>
</feature>
<feature type="active site" description="Nucleophile" evidence="1">
    <location>
        <position position="324"/>
    </location>
</feature>
<feature type="active site" description="Proton acceptor" evidence="1">
    <location>
        <position position="358"/>
    </location>
</feature>
<feature type="binding site" evidence="1">
    <location>
        <position position="190"/>
    </location>
    <ligand>
        <name>S-adenosyl-L-methionine</name>
        <dbReference type="ChEBI" id="CHEBI:59789"/>
    </ligand>
</feature>
<feature type="binding site" evidence="1">
    <location>
        <position position="218"/>
    </location>
    <ligand>
        <name>S-adenosyl-L-methionine</name>
        <dbReference type="ChEBI" id="CHEBI:59789"/>
    </ligand>
</feature>
<feature type="binding site" evidence="1">
    <location>
        <position position="223"/>
    </location>
    <ligand>
        <name>S-adenosyl-L-methionine</name>
        <dbReference type="ChEBI" id="CHEBI:59789"/>
    </ligand>
</feature>
<feature type="binding site" evidence="1">
    <location>
        <position position="239"/>
    </location>
    <ligand>
        <name>S-adenosyl-L-methionine</name>
        <dbReference type="ChEBI" id="CHEBI:59789"/>
    </ligand>
</feature>
<feature type="binding site" evidence="1">
    <location>
        <position position="299"/>
    </location>
    <ligand>
        <name>S-adenosyl-L-methionine</name>
        <dbReference type="ChEBI" id="CHEBI:59789"/>
    </ligand>
</feature>
<organism>
    <name type="scientific">Escherichia coli (strain ATCC 8739 / DSM 1576 / NBRC 3972 / NCIMB 8545 / WDCM 00012 / Crooks)</name>
    <dbReference type="NCBI Taxonomy" id="481805"/>
    <lineage>
        <taxon>Bacteria</taxon>
        <taxon>Pseudomonadati</taxon>
        <taxon>Pseudomonadota</taxon>
        <taxon>Gammaproteobacteria</taxon>
        <taxon>Enterobacterales</taxon>
        <taxon>Enterobacteriaceae</taxon>
        <taxon>Escherichia</taxon>
    </lineage>
</organism>
<comment type="function">
    <text evidence="1">Dual-specificity methyltransferase that catalyzes the formation of 5-methyluridine at position 54 (m5U54) in all tRNAs, and that of position 341 (m5U341) in tmRNA (transfer-mRNA).</text>
</comment>
<comment type="catalytic activity">
    <reaction evidence="1">
        <text>uridine(54) in tRNA + S-adenosyl-L-methionine = 5-methyluridine(54) in tRNA + S-adenosyl-L-homocysteine + H(+)</text>
        <dbReference type="Rhea" id="RHEA:42712"/>
        <dbReference type="Rhea" id="RHEA-COMP:10167"/>
        <dbReference type="Rhea" id="RHEA-COMP:10193"/>
        <dbReference type="ChEBI" id="CHEBI:15378"/>
        <dbReference type="ChEBI" id="CHEBI:57856"/>
        <dbReference type="ChEBI" id="CHEBI:59789"/>
        <dbReference type="ChEBI" id="CHEBI:65315"/>
        <dbReference type="ChEBI" id="CHEBI:74447"/>
        <dbReference type="EC" id="2.1.1.35"/>
    </reaction>
</comment>
<comment type="catalytic activity">
    <reaction evidence="1">
        <text>uridine(341) in tmRNA + S-adenosyl-L-methionine = 5-methyluridine(341) in tmRNA + S-adenosyl-L-homocysteine + H(+)</text>
        <dbReference type="Rhea" id="RHEA:43612"/>
        <dbReference type="Rhea" id="RHEA-COMP:10630"/>
        <dbReference type="Rhea" id="RHEA-COMP:10631"/>
        <dbReference type="ChEBI" id="CHEBI:15378"/>
        <dbReference type="ChEBI" id="CHEBI:57856"/>
        <dbReference type="ChEBI" id="CHEBI:59789"/>
        <dbReference type="ChEBI" id="CHEBI:65315"/>
        <dbReference type="ChEBI" id="CHEBI:74447"/>
    </reaction>
</comment>
<comment type="similarity">
    <text evidence="1">Belongs to the class I-like SAM-binding methyltransferase superfamily. RNA M5U methyltransferase family. TrmA subfamily.</text>
</comment>
<protein>
    <recommendedName>
        <fullName evidence="1">tRNA/tmRNA (uracil-C(5))-methyltransferase</fullName>
        <ecNumber evidence="1">2.1.1.-</ecNumber>
        <ecNumber evidence="1">2.1.1.35</ecNumber>
    </recommendedName>
    <alternativeName>
        <fullName evidence="1">tRNA (uracil(54)-C(5))-methyltransferase</fullName>
    </alternativeName>
    <alternativeName>
        <fullName evidence="1">tRNA(m5U54)-methyltransferase</fullName>
        <shortName evidence="1">RUMT</shortName>
    </alternativeName>
    <alternativeName>
        <fullName evidence="1">tmRNA (uracil(341)-C(5))-methyltransferase</fullName>
    </alternativeName>
</protein>
<keyword id="KW-0489">Methyltransferase</keyword>
<keyword id="KW-0949">S-adenosyl-L-methionine</keyword>
<keyword id="KW-0808">Transferase</keyword>
<keyword id="KW-0819">tRNA processing</keyword>
<gene>
    <name evidence="1" type="primary">trmA</name>
    <name type="ordered locus">EcolC_4051</name>
</gene>
<sequence length="366" mass="41967">MTPEHLPTEQYEAQLAEKVVRLQSMMAPFSDLVPEVFRSPVSHYRMRAEFRIWHDGDDLYHIIFDQQTKSRIRVDSFPAASELINQLMTAMIAGVRNNPVLRHKLFQIDYLTTLSNQAVVSLLYHKKLDDEWRQEAEALRDALRAQNLNVHLIGRATKTKIELDQDYIDERLPVAGKEMIYRQVENSFTQPNAAMNIQMLEWALDVTKGSKGDLLELYCGNGNFSLALARNFDRVLATEIAKPSVAAAQYNIAANHIDNVQIIRMAAEEFTQAMNGVREFNRLQGIDLKSYQCETIFVDPPRSGLDSETEKMVQAYPRILYISCNPETLCKNLETLSQTHKVERLALFDQFPYTHHMECGVLLTAK</sequence>
<reference key="1">
    <citation type="submission" date="2008-02" db="EMBL/GenBank/DDBJ databases">
        <title>Complete sequence of Escherichia coli C str. ATCC 8739.</title>
        <authorList>
            <person name="Copeland A."/>
            <person name="Lucas S."/>
            <person name="Lapidus A."/>
            <person name="Glavina del Rio T."/>
            <person name="Dalin E."/>
            <person name="Tice H."/>
            <person name="Bruce D."/>
            <person name="Goodwin L."/>
            <person name="Pitluck S."/>
            <person name="Kiss H."/>
            <person name="Brettin T."/>
            <person name="Detter J.C."/>
            <person name="Han C."/>
            <person name="Kuske C.R."/>
            <person name="Schmutz J."/>
            <person name="Larimer F."/>
            <person name="Land M."/>
            <person name="Hauser L."/>
            <person name="Kyrpides N."/>
            <person name="Mikhailova N."/>
            <person name="Ingram L."/>
            <person name="Richardson P."/>
        </authorList>
    </citation>
    <scope>NUCLEOTIDE SEQUENCE [LARGE SCALE GENOMIC DNA]</scope>
    <source>
        <strain>ATCC 8739 / DSM 1576 / NBRC 3972 / NCIMB 8545 / WDCM 00012 / Crooks</strain>
    </source>
</reference>
<evidence type="ECO:0000255" key="1">
    <source>
        <dbReference type="HAMAP-Rule" id="MF_01011"/>
    </source>
</evidence>